<reference key="1">
    <citation type="journal article" date="2009" name="J. Bacteriol.">
        <title>Genome sequences of three Agrobacterium biovars help elucidate the evolution of multichromosome genomes in bacteria.</title>
        <authorList>
            <person name="Slater S.C."/>
            <person name="Goldman B.S."/>
            <person name="Goodner B."/>
            <person name="Setubal J.C."/>
            <person name="Farrand S.K."/>
            <person name="Nester E.W."/>
            <person name="Burr T.J."/>
            <person name="Banta L."/>
            <person name="Dickerman A.W."/>
            <person name="Paulsen I."/>
            <person name="Otten L."/>
            <person name="Suen G."/>
            <person name="Welch R."/>
            <person name="Almeida N.F."/>
            <person name="Arnold F."/>
            <person name="Burton O.T."/>
            <person name="Du Z."/>
            <person name="Ewing A."/>
            <person name="Godsy E."/>
            <person name="Heisel S."/>
            <person name="Houmiel K.L."/>
            <person name="Jhaveri J."/>
            <person name="Lu J."/>
            <person name="Miller N.M."/>
            <person name="Norton S."/>
            <person name="Chen Q."/>
            <person name="Phoolcharoen W."/>
            <person name="Ohlin V."/>
            <person name="Ondrusek D."/>
            <person name="Pride N."/>
            <person name="Stricklin S.L."/>
            <person name="Sun J."/>
            <person name="Wheeler C."/>
            <person name="Wilson L."/>
            <person name="Zhu H."/>
            <person name="Wood D.W."/>
        </authorList>
    </citation>
    <scope>NUCLEOTIDE SEQUENCE [LARGE SCALE GENOMIC DNA]</scope>
    <source>
        <strain>K84 / ATCC BAA-868</strain>
    </source>
</reference>
<keyword id="KW-0963">Cytoplasm</keyword>
<keyword id="KW-0275">Fatty acid biosynthesis</keyword>
<keyword id="KW-0276">Fatty acid metabolism</keyword>
<keyword id="KW-0444">Lipid biosynthesis</keyword>
<keyword id="KW-0443">Lipid metabolism</keyword>
<keyword id="KW-0460">Magnesium</keyword>
<keyword id="KW-0479">Metal-binding</keyword>
<keyword id="KW-0808">Transferase</keyword>
<dbReference type="EC" id="2.7.8.7" evidence="1"/>
<dbReference type="EMBL" id="CP000628">
    <property type="protein sequence ID" value="ACM25992.1"/>
    <property type="molecule type" value="Genomic_DNA"/>
</dbReference>
<dbReference type="RefSeq" id="WP_007693090.1">
    <property type="nucleotide sequence ID" value="NC_011985.1"/>
</dbReference>
<dbReference type="SMR" id="B9JC71"/>
<dbReference type="STRING" id="311403.Arad_1591"/>
<dbReference type="GeneID" id="86847871"/>
<dbReference type="KEGG" id="ara:Arad_1591"/>
<dbReference type="eggNOG" id="COG0736">
    <property type="taxonomic scope" value="Bacteria"/>
</dbReference>
<dbReference type="HOGENOM" id="CLU_089696_0_2_5"/>
<dbReference type="Proteomes" id="UP000001600">
    <property type="component" value="Chromosome 1"/>
</dbReference>
<dbReference type="GO" id="GO:0005737">
    <property type="term" value="C:cytoplasm"/>
    <property type="evidence" value="ECO:0007669"/>
    <property type="project" value="UniProtKB-SubCell"/>
</dbReference>
<dbReference type="GO" id="GO:0008897">
    <property type="term" value="F:holo-[acyl-carrier-protein] synthase activity"/>
    <property type="evidence" value="ECO:0007669"/>
    <property type="project" value="UniProtKB-UniRule"/>
</dbReference>
<dbReference type="GO" id="GO:0000287">
    <property type="term" value="F:magnesium ion binding"/>
    <property type="evidence" value="ECO:0007669"/>
    <property type="project" value="UniProtKB-UniRule"/>
</dbReference>
<dbReference type="GO" id="GO:0006633">
    <property type="term" value="P:fatty acid biosynthetic process"/>
    <property type="evidence" value="ECO:0007669"/>
    <property type="project" value="UniProtKB-UniRule"/>
</dbReference>
<dbReference type="Gene3D" id="3.90.470.20">
    <property type="entry name" value="4'-phosphopantetheinyl transferase domain"/>
    <property type="match status" value="1"/>
</dbReference>
<dbReference type="HAMAP" id="MF_00101">
    <property type="entry name" value="AcpS"/>
    <property type="match status" value="1"/>
</dbReference>
<dbReference type="InterPro" id="IPR008278">
    <property type="entry name" value="4-PPantetheinyl_Trfase_dom"/>
</dbReference>
<dbReference type="InterPro" id="IPR037143">
    <property type="entry name" value="4-PPantetheinyl_Trfase_dom_sf"/>
</dbReference>
<dbReference type="InterPro" id="IPR002582">
    <property type="entry name" value="ACPS"/>
</dbReference>
<dbReference type="InterPro" id="IPR004568">
    <property type="entry name" value="Ppantetheine-prot_Trfase_dom"/>
</dbReference>
<dbReference type="NCBIfam" id="TIGR00516">
    <property type="entry name" value="acpS"/>
    <property type="match status" value="1"/>
</dbReference>
<dbReference type="NCBIfam" id="TIGR00556">
    <property type="entry name" value="pantethn_trn"/>
    <property type="match status" value="1"/>
</dbReference>
<dbReference type="Pfam" id="PF01648">
    <property type="entry name" value="ACPS"/>
    <property type="match status" value="1"/>
</dbReference>
<dbReference type="SUPFAM" id="SSF56214">
    <property type="entry name" value="4'-phosphopantetheinyl transferase"/>
    <property type="match status" value="1"/>
</dbReference>
<comment type="function">
    <text evidence="1">Transfers the 4'-phosphopantetheine moiety from coenzyme A to a Ser of acyl-carrier-protein.</text>
</comment>
<comment type="catalytic activity">
    <reaction evidence="1">
        <text>apo-[ACP] + CoA = holo-[ACP] + adenosine 3',5'-bisphosphate + H(+)</text>
        <dbReference type="Rhea" id="RHEA:12068"/>
        <dbReference type="Rhea" id="RHEA-COMP:9685"/>
        <dbReference type="Rhea" id="RHEA-COMP:9690"/>
        <dbReference type="ChEBI" id="CHEBI:15378"/>
        <dbReference type="ChEBI" id="CHEBI:29999"/>
        <dbReference type="ChEBI" id="CHEBI:57287"/>
        <dbReference type="ChEBI" id="CHEBI:58343"/>
        <dbReference type="ChEBI" id="CHEBI:64479"/>
        <dbReference type="EC" id="2.7.8.7"/>
    </reaction>
</comment>
<comment type="cofactor">
    <cofactor evidence="1">
        <name>Mg(2+)</name>
        <dbReference type="ChEBI" id="CHEBI:18420"/>
    </cofactor>
</comment>
<comment type="subcellular location">
    <subcellularLocation>
        <location evidence="1">Cytoplasm</location>
    </subcellularLocation>
</comment>
<comment type="similarity">
    <text evidence="1">Belongs to the P-Pant transferase superfamily. AcpS family.</text>
</comment>
<feature type="chain" id="PRO_1000118785" description="Holo-[acyl-carrier-protein] synthase">
    <location>
        <begin position="1"/>
        <end position="134"/>
    </location>
</feature>
<feature type="binding site" evidence="1">
    <location>
        <position position="8"/>
    </location>
    <ligand>
        <name>Mg(2+)</name>
        <dbReference type="ChEBI" id="CHEBI:18420"/>
    </ligand>
</feature>
<feature type="binding site" evidence="1">
    <location>
        <position position="57"/>
    </location>
    <ligand>
        <name>Mg(2+)</name>
        <dbReference type="ChEBI" id="CHEBI:18420"/>
    </ligand>
</feature>
<name>ACPS_RHIR8</name>
<gene>
    <name evidence="1" type="primary">acpS</name>
    <name type="ordered locus">Arad_1591</name>
</gene>
<organism>
    <name type="scientific">Rhizobium rhizogenes (strain K84 / ATCC BAA-868)</name>
    <name type="common">Agrobacterium radiobacter</name>
    <dbReference type="NCBI Taxonomy" id="311403"/>
    <lineage>
        <taxon>Bacteria</taxon>
        <taxon>Pseudomonadati</taxon>
        <taxon>Pseudomonadota</taxon>
        <taxon>Alphaproteobacteria</taxon>
        <taxon>Hyphomicrobiales</taxon>
        <taxon>Rhizobiaceae</taxon>
        <taxon>Rhizobium/Agrobacterium group</taxon>
        <taxon>Rhizobium</taxon>
    </lineage>
</organism>
<proteinExistence type="inferred from homology"/>
<evidence type="ECO:0000255" key="1">
    <source>
        <dbReference type="HAMAP-Rule" id="MF_00101"/>
    </source>
</evidence>
<accession>B9JC71</accession>
<sequence>MIIGIGSDLIDIRRVEKSIERFGTRFTERCFTDIERAKSEGRKNKAASYAKRFAAKEACSKALGTGLAQGVFWRDMGVVNLPSGKPTMQLTGGAARRLAAMLPENHRAAIHLTITDDFPLAQAFVIIEALPIAG</sequence>
<protein>
    <recommendedName>
        <fullName evidence="1">Holo-[acyl-carrier-protein] synthase</fullName>
        <shortName evidence="1">Holo-ACP synthase</shortName>
        <ecNumber evidence="1">2.7.8.7</ecNumber>
    </recommendedName>
    <alternativeName>
        <fullName evidence="1">4'-phosphopantetheinyl transferase AcpS</fullName>
    </alternativeName>
</protein>